<proteinExistence type="evidence at protein level"/>
<evidence type="ECO:0000250" key="1">
    <source>
        <dbReference type="UniProtKB" id="C8VTS4"/>
    </source>
</evidence>
<evidence type="ECO:0000255" key="2">
    <source>
        <dbReference type="PROSITE-ProRule" id="PRU01165"/>
    </source>
</evidence>
<evidence type="ECO:0000256" key="3">
    <source>
        <dbReference type="SAM" id="MobiDB-lite"/>
    </source>
</evidence>
<evidence type="ECO:0000269" key="4">
    <source>
    </source>
</evidence>
<evidence type="ECO:0000269" key="5">
    <source>
    </source>
</evidence>
<evidence type="ECO:0000303" key="6">
    <source>
    </source>
</evidence>
<evidence type="ECO:0000305" key="7"/>
<dbReference type="EMBL" id="AM920437">
    <property type="protein sequence ID" value="CAP99520.1"/>
    <property type="molecule type" value="Genomic_DNA"/>
</dbReference>
<dbReference type="RefSeq" id="XP_002566127.1">
    <property type="nucleotide sequence ID" value="XM_002566081.1"/>
</dbReference>
<dbReference type="SMR" id="B6HU70"/>
<dbReference type="STRING" id="500485.B6HU70"/>
<dbReference type="VEuPathDB" id="FungiDB:PCH_Pc22g22320"/>
<dbReference type="eggNOG" id="ENOG502S1B4">
    <property type="taxonomic scope" value="Eukaryota"/>
</dbReference>
<dbReference type="HOGENOM" id="CLU_022491_0_0_1"/>
<dbReference type="OMA" id="YQDGRSW"/>
<dbReference type="OrthoDB" id="1746739at2759"/>
<dbReference type="BioCyc" id="PCHR:PC22G22320-MONOMER"/>
<dbReference type="Proteomes" id="UP000000724">
    <property type="component" value="Contig Pc00c22"/>
</dbReference>
<dbReference type="GO" id="GO:0005737">
    <property type="term" value="C:cytoplasm"/>
    <property type="evidence" value="ECO:0007669"/>
    <property type="project" value="UniProtKB-SubCell"/>
</dbReference>
<dbReference type="GO" id="GO:0005634">
    <property type="term" value="C:nucleus"/>
    <property type="evidence" value="ECO:0007669"/>
    <property type="project" value="UniProtKB-SubCell"/>
</dbReference>
<dbReference type="GO" id="GO:0030435">
    <property type="term" value="P:sporulation resulting in formation of a cellular spore"/>
    <property type="evidence" value="ECO:0007669"/>
    <property type="project" value="UniProtKB-KW"/>
</dbReference>
<dbReference type="Gene3D" id="2.60.40.3960">
    <property type="entry name" value="Velvet domain"/>
    <property type="match status" value="2"/>
</dbReference>
<dbReference type="InterPro" id="IPR021740">
    <property type="entry name" value="Velvet"/>
</dbReference>
<dbReference type="InterPro" id="IPR037525">
    <property type="entry name" value="Velvet_dom"/>
</dbReference>
<dbReference type="InterPro" id="IPR038491">
    <property type="entry name" value="Velvet_dom_sf"/>
</dbReference>
<dbReference type="PANTHER" id="PTHR33572">
    <property type="entry name" value="SPORE DEVELOPMENT REGULATOR VOSA"/>
    <property type="match status" value="1"/>
</dbReference>
<dbReference type="PANTHER" id="PTHR33572:SF3">
    <property type="entry name" value="VELVET COMPLEX SUBUNIT B"/>
    <property type="match status" value="1"/>
</dbReference>
<dbReference type="Pfam" id="PF11754">
    <property type="entry name" value="Velvet"/>
    <property type="match status" value="1"/>
</dbReference>
<dbReference type="PROSITE" id="PS51821">
    <property type="entry name" value="VELVET"/>
    <property type="match status" value="1"/>
</dbReference>
<reference key="1">
    <citation type="journal article" date="2008" name="Nat. Biotechnol.">
        <title>Genome sequencing and analysis of the filamentous fungus Penicillium chrysogenum.</title>
        <authorList>
            <person name="van den Berg M.A."/>
            <person name="Albang R."/>
            <person name="Albermann K."/>
            <person name="Badger J.H."/>
            <person name="Daran J.-M."/>
            <person name="Driessen A.J.M."/>
            <person name="Garcia-Estrada C."/>
            <person name="Fedorova N.D."/>
            <person name="Harris D.M."/>
            <person name="Heijne W.H.M."/>
            <person name="Joardar V.S."/>
            <person name="Kiel J.A.K.W."/>
            <person name="Kovalchuk A."/>
            <person name="Martin J.F."/>
            <person name="Nierman W.C."/>
            <person name="Nijland J.G."/>
            <person name="Pronk J.T."/>
            <person name="Roubos J.A."/>
            <person name="van der Klei I.J."/>
            <person name="van Peij N.N.M.E."/>
            <person name="Veenhuis M."/>
            <person name="von Doehren H."/>
            <person name="Wagner C."/>
            <person name="Wortman J.R."/>
            <person name="Bovenberg R.A.L."/>
        </authorList>
    </citation>
    <scope>NUCLEOTIDE SEQUENCE [LARGE SCALE GENOMIC DNA]</scope>
    <source>
        <strain>ATCC 28089 / DSM 1075 / NRRL 1951 / Wisconsin 54-1255</strain>
    </source>
</reference>
<reference key="2">
    <citation type="journal article" date="2010" name="Eukaryot. Cell">
        <title>Two components of a velvet-like complex control hyphal morphogenesis, conidiophore development, and penicillin biosynthesis in Penicillium chrysogenum.</title>
        <authorList>
            <person name="Hoff B."/>
            <person name="Kamerewerd J."/>
            <person name="Sigl C."/>
            <person name="Mitterbauer R."/>
            <person name="Zadra I."/>
            <person name="Kuernsteiner H."/>
            <person name="Kueck U."/>
        </authorList>
    </citation>
    <scope>INTERACTION WITH VELA</scope>
    <scope>SUBCELLULAR LOCATION</scope>
</reference>
<reference key="3">
    <citation type="journal article" date="2013" name="Eukaryot. Cell">
        <title>Members of the Penicillium chrysogenum velvet complex play functionally opposing roles in the regulation of penicillin biosynthesis and conidiation.</title>
        <authorList>
            <person name="Kopke K."/>
            <person name="Hoff B."/>
            <person name="Bloemendal S."/>
            <person name="Katschorowski A."/>
            <person name="Kamerewerd J."/>
            <person name="Kueck U."/>
        </authorList>
    </citation>
    <scope>FUNCTION</scope>
    <scope>DISRUPTION PHENOTYPE</scope>
    <scope>INTERACTION WITH VOSA</scope>
    <scope>SUBCELLULAR LOCATION</scope>
</reference>
<comment type="function">
    <text evidence="1 5">Component of the velvet transcription factor complex that controls sexual/asexual developmental ratio in response to light, promoting sexual development in the darkness while stimulating asexual sporulation under illumination (By similarity). The velvet complex acts as a global regulator for secondary metabolite gene expression (By similarity). Component of the velB-VosA heterodimeric complex that plays a dual role in activating genes associated with spore maturation and repressing certain development-associated genes (By similarity). The velB-VosA complex binds DNA through the DNA-binding domain of vosA that recognizes an 11-nucleotide consensus sequence 5'-CTGGCCGCGGC-3' consisting of two motifs in the promoters of key developmental regulatory genes (By similarity). Controls conidiophore formation (PubMed:23264641).</text>
</comment>
<comment type="subunit">
    <text evidence="1 4">Component of the heterotrimeric velvet complex composed of laeA, veA and velB; VeA acting as a bridging protein between laeA and velB (By similarity). Interacts with velA (PubMed:20543063). Forms a heterodimeric complex with vosA; the formation of the velB-vosA complex is light-dependent (By similarity). Interacts with vosA (PubMed:23264641).</text>
</comment>
<comment type="subcellular location">
    <subcellularLocation>
        <location evidence="4 5">Nucleus</location>
    </subcellularLocation>
    <subcellularLocation>
        <location evidence="1">Cytoplasm</location>
    </subcellularLocation>
    <text evidence="1">Nuclear localization is mediated by velA (By similarity).</text>
</comment>
<comment type="disruption phenotype">
    <text evidence="5">Shows reduced conidiospore formation but does not affect penicillin production (PubMed:23264641).</text>
</comment>
<comment type="similarity">
    <text evidence="7">Belongs to the velvet family. VelB subfamily.</text>
</comment>
<keyword id="KW-0963">Cytoplasm</keyword>
<keyword id="KW-0539">Nucleus</keyword>
<keyword id="KW-1185">Reference proteome</keyword>
<keyword id="KW-0749">Sporulation</keyword>
<keyword id="KW-0804">Transcription</keyword>
<keyword id="KW-0805">Transcription regulation</keyword>
<accession>B6HU70</accession>
<gene>
    <name evidence="6" type="primary">velB</name>
    <name type="ORF">PCH_Pc22g22320</name>
</gene>
<organism>
    <name type="scientific">Penicillium rubens (strain ATCC 28089 / DSM 1075 / NRRL 1951 / Wisconsin 54-1255)</name>
    <name type="common">Penicillium chrysogenum</name>
    <dbReference type="NCBI Taxonomy" id="500485"/>
    <lineage>
        <taxon>Eukaryota</taxon>
        <taxon>Fungi</taxon>
        <taxon>Dikarya</taxon>
        <taxon>Ascomycota</taxon>
        <taxon>Pezizomycotina</taxon>
        <taxon>Eurotiomycetes</taxon>
        <taxon>Eurotiomycetidae</taxon>
        <taxon>Eurotiales</taxon>
        <taxon>Aspergillaceae</taxon>
        <taxon>Penicillium</taxon>
        <taxon>Penicillium chrysogenum species complex</taxon>
    </lineage>
</organism>
<protein>
    <recommendedName>
        <fullName evidence="7">Velvet complex subunit B</fullName>
    </recommendedName>
</protein>
<sequence>MYAVEDRHHPVPPPLSMDRISAPSVQYPSGTTSLRQSDHLAPVSNYQDGRSWSLQVVQQPIRARMCGFGDKVGDFSAVILLPLPNTSQDRRPITPPPCIRLIVRDAQTDKEIDIKCVQPATLIPLSFLTVSSSSEIDTSFYVLTVDLWNADGTSEVNLVKHSATSPSISTAMSSSYPPPPQSVSPTYPGYNQNQYPVGYPPQMNNYYGGQQVAYQNQYGQPVTYPQYYSGGQMPASMSPAAQPVTGGPGGMFTRNLIGSLSASAFRLTDPDNKIGVWFILQDLSVRTEGTFRLKMSFVDVGTSTETSNGAPVIEPHQSWPRFSLNPSRSSPPKSSPVLLRAPSSASALRYRVSRSPFARTE</sequence>
<feature type="chain" id="PRO_0000435910" description="Velvet complex subunit B">
    <location>
        <begin position="1"/>
        <end position="361"/>
    </location>
</feature>
<feature type="domain" description="Velvet" evidence="2">
    <location>
        <begin position="47"/>
        <end position="353"/>
    </location>
</feature>
<feature type="region of interest" description="Disordered" evidence="3">
    <location>
        <begin position="1"/>
        <end position="36"/>
    </location>
</feature>
<feature type="region of interest" description="Disordered" evidence="3">
    <location>
        <begin position="308"/>
        <end position="340"/>
    </location>
</feature>
<feature type="compositionally biased region" description="Polar residues" evidence="3">
    <location>
        <begin position="23"/>
        <end position="35"/>
    </location>
</feature>
<feature type="compositionally biased region" description="Low complexity" evidence="3">
    <location>
        <begin position="323"/>
        <end position="336"/>
    </location>
</feature>
<name>VELB_PENRW</name>